<feature type="chain" id="PRO_0000363683" description="Probable cGMP 3',5'-cyclic phosphodiesterase subunit delta">
    <location>
        <begin position="1"/>
        <end position="151"/>
    </location>
</feature>
<name>PDE6D_DROYA</name>
<keyword id="KW-0140">cGMP</keyword>
<keyword id="KW-0963">Cytoplasm</keyword>
<keyword id="KW-0539">Nucleus</keyword>
<organism>
    <name type="scientific">Drosophila yakuba</name>
    <name type="common">Fruit fly</name>
    <dbReference type="NCBI Taxonomy" id="7245"/>
    <lineage>
        <taxon>Eukaryota</taxon>
        <taxon>Metazoa</taxon>
        <taxon>Ecdysozoa</taxon>
        <taxon>Arthropoda</taxon>
        <taxon>Hexapoda</taxon>
        <taxon>Insecta</taxon>
        <taxon>Pterygota</taxon>
        <taxon>Neoptera</taxon>
        <taxon>Endopterygota</taxon>
        <taxon>Diptera</taxon>
        <taxon>Brachycera</taxon>
        <taxon>Muscomorpha</taxon>
        <taxon>Ephydroidea</taxon>
        <taxon>Drosophilidae</taxon>
        <taxon>Drosophila</taxon>
        <taxon>Sophophora</taxon>
    </lineage>
</organism>
<protein>
    <recommendedName>
        <fullName>Probable cGMP 3',5'-cyclic phosphodiesterase subunit delta</fullName>
    </recommendedName>
</protein>
<proteinExistence type="inferred from homology"/>
<evidence type="ECO:0000250" key="1">
    <source>
        <dbReference type="UniProtKB" id="Q9VLJ0"/>
    </source>
</evidence>
<evidence type="ECO:0000255" key="2"/>
<evidence type="ECO:0000312" key="3">
    <source>
        <dbReference type="EMBL" id="EDW88560.1"/>
    </source>
</evidence>
<comment type="subunit">
    <text evidence="1">Interacts with Pde6.</text>
</comment>
<comment type="subcellular location">
    <subcellularLocation>
        <location evidence="1">Nucleus</location>
    </subcellularLocation>
    <subcellularLocation>
        <location evidence="1">Cytoplasm</location>
    </subcellularLocation>
</comment>
<comment type="similarity">
    <text evidence="2">Belongs to the PDE6D/unc-119 family.</text>
</comment>
<gene>
    <name evidence="1" type="primary">PrBP</name>
    <name type="ORF">GE10828</name>
</gene>
<dbReference type="EMBL" id="CM000157">
    <property type="protein sequence ID" value="EDW88560.1"/>
    <property type="molecule type" value="Genomic_DNA"/>
</dbReference>
<dbReference type="SMR" id="B4NXG9"/>
<dbReference type="EnsemblMetazoa" id="FBtr0398965">
    <property type="protein sequence ID" value="FBpp0358022"/>
    <property type="gene ID" value="FBgn0228668"/>
</dbReference>
<dbReference type="EnsemblMetazoa" id="XM_002088812.4">
    <property type="protein sequence ID" value="XP_002088848.1"/>
    <property type="gene ID" value="LOC6527775"/>
</dbReference>
<dbReference type="GeneID" id="6527775"/>
<dbReference type="KEGG" id="dya:Dyak_GE10828"/>
<dbReference type="eggNOG" id="KOG4038">
    <property type="taxonomic scope" value="Eukaryota"/>
</dbReference>
<dbReference type="HOGENOM" id="CLU_119682_0_0_1"/>
<dbReference type="OMA" id="STNTWQN"/>
<dbReference type="OrthoDB" id="10248777at2759"/>
<dbReference type="PhylomeDB" id="B4NXG9"/>
<dbReference type="Proteomes" id="UP000002282">
    <property type="component" value="Chromosome 2L"/>
</dbReference>
<dbReference type="GO" id="GO:0005737">
    <property type="term" value="C:cytoplasm"/>
    <property type="evidence" value="ECO:0000250"/>
    <property type="project" value="UniProtKB"/>
</dbReference>
<dbReference type="GO" id="GO:0005634">
    <property type="term" value="C:nucleus"/>
    <property type="evidence" value="ECO:0000250"/>
    <property type="project" value="UniProtKB"/>
</dbReference>
<dbReference type="GO" id="GO:0050953">
    <property type="term" value="P:sensory perception of light stimulus"/>
    <property type="evidence" value="ECO:0007669"/>
    <property type="project" value="InterPro"/>
</dbReference>
<dbReference type="FunFam" id="2.70.50.40:FF:000002">
    <property type="entry name" value="Retinal rod rhodopsin-sensitive cGMP 3',5'-cyclic phosphodiesterase subunit delta"/>
    <property type="match status" value="1"/>
</dbReference>
<dbReference type="Gene3D" id="2.70.50.40">
    <property type="entry name" value="GMP phosphodiesterase, delta subunit"/>
    <property type="match status" value="1"/>
</dbReference>
<dbReference type="InterPro" id="IPR014756">
    <property type="entry name" value="Ig_E-set"/>
</dbReference>
<dbReference type="InterPro" id="IPR008015">
    <property type="entry name" value="PDED_dom"/>
</dbReference>
<dbReference type="InterPro" id="IPR037036">
    <property type="entry name" value="PDED_dom_sf"/>
</dbReference>
<dbReference type="InterPro" id="IPR017287">
    <property type="entry name" value="Rhodop-sen_GMP-Pdiesterase_dsu"/>
</dbReference>
<dbReference type="PANTHER" id="PTHR12976">
    <property type="entry name" value="RETINAL ROD RHODOPSIN-SENSITIVE CGMP 3',5'-CYCLIC PHOSPHODIESTERASE DELTA-SUBUNIT"/>
    <property type="match status" value="1"/>
</dbReference>
<dbReference type="PANTHER" id="PTHR12976:SF0">
    <property type="entry name" value="RETINAL ROD RHODOPSIN-SENSITIVE CGMP 3',5'-CYCLIC PHOSPHODIESTERASE SUBUNIT DELTA"/>
    <property type="match status" value="1"/>
</dbReference>
<dbReference type="Pfam" id="PF05351">
    <property type="entry name" value="GMP_PDE_delta"/>
    <property type="match status" value="1"/>
</dbReference>
<dbReference type="PIRSF" id="PIRSF037825">
    <property type="entry name" value="GMP-Pdiesterase_delta"/>
    <property type="match status" value="1"/>
</dbReference>
<dbReference type="SUPFAM" id="SSF81296">
    <property type="entry name" value="E set domains"/>
    <property type="match status" value="1"/>
</dbReference>
<reference evidence="3" key="1">
    <citation type="journal article" date="2007" name="Nature">
        <title>Evolution of genes and genomes on the Drosophila phylogeny.</title>
        <authorList>
            <consortium name="Drosophila 12 genomes consortium"/>
        </authorList>
    </citation>
    <scope>NUCLEOTIDE SEQUENCE [LARGE SCALE GENOMIC DNA]</scope>
    <source>
        <strain evidence="3">Tai18E2 / Tucson 14021-0261.01</strain>
    </source>
</reference>
<sequence length="151" mass="17404">MGSDDQSAGDRIQKGFQINYMILRDADSGKIIWQENKDFSAPDQEHEARVPVKILDMRAVSREINFSTIESMENFRLDQKVLFKGRIMEEWFFEMGFVGANTTNTWQSTIEAAPESQMMPAKVLNGNVTIQTSFYDNETLITKSVVRLYYI</sequence>
<accession>B4NXG9</accession>